<reference key="1">
    <citation type="journal article" date="2004" name="Genome Res.">
        <title>The status, quality, and expansion of the NIH full-length cDNA project: the Mammalian Gene Collection (MGC).</title>
        <authorList>
            <consortium name="The MGC Project Team"/>
        </authorList>
    </citation>
    <scope>NUCLEOTIDE SEQUENCE [LARGE SCALE MRNA]</scope>
    <source>
        <strain>Czech II</strain>
        <tissue>Mammary tumor</tissue>
    </source>
</reference>
<name>TRI68_MOUSE</name>
<accession>Q8K243</accession>
<gene>
    <name type="primary">Trim68</name>
    <name type="synonym">Rnf137</name>
</gene>
<sequence length="485" mass="56098">MDPAVLMEAIVEEVNCPICMTFLREPVSISCGHTFCHSCLSGLWKLPGESQNLSYTCPLCRAPVKPRKLRPNWQLASVVDKVRLLGFCMEMGLKTDVCDLHKEQLTMFCKEDDMVTCEACKQSPEHEAHSVVPIKDVAWEYKWKLQQALEHLRKEQEEAWKLEVSEKEQAAIWKTQMERRKQSIRWEFEKYRQLLKEKELPCQQAEEEAAAAQASLEQEKGETASKLELRREAIIRQSQVLWSMIVELEERSQRPVRWMLQGIQEALNRSESWTLQQLEPISLELKTDCRVLGLRETLKTFAVDVRLDPDTAYSRLVVSKDRKSVHYGVTQQNLPDNPERFYRYNIVLGSQCISSGRHYWEVEVGDRSEWGLGVCVENVDRKEVVYLSPRYGFWVIRLRKGTEYRAGTDEYPLLPLTVPPHRVGIFLDYEAHDISFYNVTDGASHIFTFPCYPFPGRLLPYFSPCYSIDTNNTTPLTICTLGGEG</sequence>
<proteinExistence type="evidence at transcript level"/>
<protein>
    <recommendedName>
        <fullName>E3 ubiquitin-protein ligase TRIM68</fullName>
        <ecNumber>2.3.2.27</ecNumber>
    </recommendedName>
    <alternativeName>
        <fullName>RING finger protein 137</fullName>
    </alternativeName>
    <alternativeName>
        <fullName evidence="6">RING-type E3 ubiquitin transferase TRIM68</fullName>
    </alternativeName>
    <alternativeName>
        <fullName>Tripartite motif-containing protein 68</fullName>
    </alternativeName>
</protein>
<comment type="function">
    <text evidence="1">Functions as a ubiquitin E3 ligase. Acts as a coactivator of androgen receptor (AR) depending on its ubiquitin ligase activity.</text>
</comment>
<comment type="catalytic activity">
    <reaction>
        <text>S-ubiquitinyl-[E2 ubiquitin-conjugating enzyme]-L-cysteine + [acceptor protein]-L-lysine = [E2 ubiquitin-conjugating enzyme]-L-cysteine + N(6)-ubiquitinyl-[acceptor protein]-L-lysine.</text>
        <dbReference type="EC" id="2.3.2.27"/>
    </reaction>
</comment>
<comment type="pathway">
    <text>Protein modification; protein ubiquitination.</text>
</comment>
<comment type="subunit">
    <text evidence="1">Interacts with AR/androgen receptor (via ligand-binding domain). Interacts with KAT5/TIP60.</text>
</comment>
<comment type="subcellular location">
    <subcellularLocation>
        <location evidence="1">Cytoplasm</location>
        <location evidence="1">Perinuclear region</location>
    </subcellularLocation>
    <subcellularLocation>
        <location evidence="1">Nucleus</location>
    </subcellularLocation>
    <text evidence="1">Colocalized with AR in nucleus.</text>
</comment>
<comment type="domain">
    <text evidence="1">The RING domain is essential for ubiquitin E3 ligase activity.</text>
</comment>
<comment type="PTM">
    <text evidence="1">Auto-ubiquitinated.</text>
</comment>
<comment type="similarity">
    <text evidence="6">Belongs to the TRIM/RBCC family.</text>
</comment>
<keyword id="KW-0175">Coiled coil</keyword>
<keyword id="KW-0963">Cytoplasm</keyword>
<keyword id="KW-0479">Metal-binding</keyword>
<keyword id="KW-0539">Nucleus</keyword>
<keyword id="KW-1185">Reference proteome</keyword>
<keyword id="KW-0808">Transferase</keyword>
<keyword id="KW-0832">Ubl conjugation</keyword>
<keyword id="KW-0833">Ubl conjugation pathway</keyword>
<keyword id="KW-0862">Zinc</keyword>
<keyword id="KW-0863">Zinc-finger</keyword>
<dbReference type="EC" id="2.3.2.27"/>
<dbReference type="EMBL" id="BC034249">
    <property type="protein sequence ID" value="AAH34249.1"/>
    <property type="molecule type" value="mRNA"/>
</dbReference>
<dbReference type="CCDS" id="CCDS40052.1"/>
<dbReference type="SMR" id="Q8K243"/>
<dbReference type="FunCoup" id="Q8K243">
    <property type="interactions" value="790"/>
</dbReference>
<dbReference type="STRING" id="10090.ENSMUSP00000080813"/>
<dbReference type="iPTMnet" id="Q8K243"/>
<dbReference type="PhosphoSitePlus" id="Q8K243"/>
<dbReference type="PaxDb" id="10090-ENSMUSP00000080813"/>
<dbReference type="ProteomicsDB" id="259331"/>
<dbReference type="UCSC" id="uc009isg.2">
    <property type="organism name" value="mouse"/>
</dbReference>
<dbReference type="AGR" id="MGI:2142077"/>
<dbReference type="MGI" id="MGI:2142077">
    <property type="gene designation" value="Trim68"/>
</dbReference>
<dbReference type="eggNOG" id="KOG2177">
    <property type="taxonomic scope" value="Eukaryota"/>
</dbReference>
<dbReference type="InParanoid" id="Q8K243"/>
<dbReference type="PhylomeDB" id="Q8K243"/>
<dbReference type="UniPathway" id="UPA00143"/>
<dbReference type="PRO" id="PR:Q8K243"/>
<dbReference type="Proteomes" id="UP000000589">
    <property type="component" value="Unplaced"/>
</dbReference>
<dbReference type="RNAct" id="Q8K243">
    <property type="molecule type" value="protein"/>
</dbReference>
<dbReference type="GO" id="GO:0005634">
    <property type="term" value="C:nucleus"/>
    <property type="evidence" value="ECO:0000250"/>
    <property type="project" value="UniProtKB"/>
</dbReference>
<dbReference type="GO" id="GO:0048471">
    <property type="term" value="C:perinuclear region of cytoplasm"/>
    <property type="evidence" value="ECO:0007669"/>
    <property type="project" value="UniProtKB-SubCell"/>
</dbReference>
<dbReference type="GO" id="GO:0035035">
    <property type="term" value="F:histone acetyltransferase binding"/>
    <property type="evidence" value="ECO:0000250"/>
    <property type="project" value="UniProtKB"/>
</dbReference>
<dbReference type="GO" id="GO:0004842">
    <property type="term" value="F:ubiquitin-protein transferase activity"/>
    <property type="evidence" value="ECO:0000250"/>
    <property type="project" value="UniProtKB"/>
</dbReference>
<dbReference type="GO" id="GO:0008270">
    <property type="term" value="F:zinc ion binding"/>
    <property type="evidence" value="ECO:0007669"/>
    <property type="project" value="UniProtKB-KW"/>
</dbReference>
<dbReference type="GO" id="GO:0016567">
    <property type="term" value="P:protein ubiquitination"/>
    <property type="evidence" value="ECO:0007669"/>
    <property type="project" value="UniProtKB-UniPathway"/>
</dbReference>
<dbReference type="CDD" id="cd16610">
    <property type="entry name" value="RING-HC_TRIM68_C-IV"/>
    <property type="match status" value="1"/>
</dbReference>
<dbReference type="CDD" id="cd13733">
    <property type="entry name" value="SPRY_PRY_C-I_1"/>
    <property type="match status" value="1"/>
</dbReference>
<dbReference type="FunFam" id="2.60.120.920:FF:000004">
    <property type="entry name" value="Butyrophilin subfamily 1 member A1"/>
    <property type="match status" value="1"/>
</dbReference>
<dbReference type="Gene3D" id="2.60.120.920">
    <property type="match status" value="1"/>
</dbReference>
<dbReference type="Gene3D" id="3.30.160.60">
    <property type="entry name" value="Classic Zinc Finger"/>
    <property type="match status" value="1"/>
</dbReference>
<dbReference type="Gene3D" id="3.30.40.10">
    <property type="entry name" value="Zinc/RING finger domain, C3HC4 (zinc finger)"/>
    <property type="match status" value="1"/>
</dbReference>
<dbReference type="InterPro" id="IPR001870">
    <property type="entry name" value="B30.2/SPRY"/>
</dbReference>
<dbReference type="InterPro" id="IPR043136">
    <property type="entry name" value="B30.2/SPRY_sf"/>
</dbReference>
<dbReference type="InterPro" id="IPR003879">
    <property type="entry name" value="Butyrophylin_SPRY"/>
</dbReference>
<dbReference type="InterPro" id="IPR013320">
    <property type="entry name" value="ConA-like_dom_sf"/>
</dbReference>
<dbReference type="InterPro" id="IPR006574">
    <property type="entry name" value="PRY"/>
</dbReference>
<dbReference type="InterPro" id="IPR003877">
    <property type="entry name" value="SPRY_dom"/>
</dbReference>
<dbReference type="InterPro" id="IPR050143">
    <property type="entry name" value="TRIM/RBCC"/>
</dbReference>
<dbReference type="InterPro" id="IPR042656">
    <property type="entry name" value="TRIM68_RING-HC"/>
</dbReference>
<dbReference type="InterPro" id="IPR000315">
    <property type="entry name" value="Znf_B-box"/>
</dbReference>
<dbReference type="InterPro" id="IPR001841">
    <property type="entry name" value="Znf_RING"/>
</dbReference>
<dbReference type="InterPro" id="IPR013083">
    <property type="entry name" value="Znf_RING/FYVE/PHD"/>
</dbReference>
<dbReference type="InterPro" id="IPR017907">
    <property type="entry name" value="Znf_RING_CS"/>
</dbReference>
<dbReference type="PANTHER" id="PTHR24103">
    <property type="entry name" value="E3 UBIQUITIN-PROTEIN LIGASE TRIM"/>
    <property type="match status" value="1"/>
</dbReference>
<dbReference type="Pfam" id="PF13765">
    <property type="entry name" value="PRY"/>
    <property type="match status" value="1"/>
</dbReference>
<dbReference type="Pfam" id="PF00622">
    <property type="entry name" value="SPRY"/>
    <property type="match status" value="1"/>
</dbReference>
<dbReference type="Pfam" id="PF00643">
    <property type="entry name" value="zf-B_box"/>
    <property type="match status" value="1"/>
</dbReference>
<dbReference type="Pfam" id="PF15227">
    <property type="entry name" value="zf-C3HC4_4"/>
    <property type="match status" value="1"/>
</dbReference>
<dbReference type="PRINTS" id="PR01407">
    <property type="entry name" value="BUTYPHLNCDUF"/>
</dbReference>
<dbReference type="SMART" id="SM00336">
    <property type="entry name" value="BBOX"/>
    <property type="match status" value="1"/>
</dbReference>
<dbReference type="SMART" id="SM00589">
    <property type="entry name" value="PRY"/>
    <property type="match status" value="1"/>
</dbReference>
<dbReference type="SMART" id="SM00184">
    <property type="entry name" value="RING"/>
    <property type="match status" value="1"/>
</dbReference>
<dbReference type="SMART" id="SM00449">
    <property type="entry name" value="SPRY"/>
    <property type="match status" value="1"/>
</dbReference>
<dbReference type="SUPFAM" id="SSF57845">
    <property type="entry name" value="B-box zinc-binding domain"/>
    <property type="match status" value="1"/>
</dbReference>
<dbReference type="SUPFAM" id="SSF49899">
    <property type="entry name" value="Concanavalin A-like lectins/glucanases"/>
    <property type="match status" value="1"/>
</dbReference>
<dbReference type="SUPFAM" id="SSF57850">
    <property type="entry name" value="RING/U-box"/>
    <property type="match status" value="1"/>
</dbReference>
<dbReference type="PROSITE" id="PS50188">
    <property type="entry name" value="B302_SPRY"/>
    <property type="match status" value="1"/>
</dbReference>
<dbReference type="PROSITE" id="PS50119">
    <property type="entry name" value="ZF_BBOX"/>
    <property type="match status" value="1"/>
</dbReference>
<dbReference type="PROSITE" id="PS00518">
    <property type="entry name" value="ZF_RING_1"/>
    <property type="match status" value="1"/>
</dbReference>
<dbReference type="PROSITE" id="PS50089">
    <property type="entry name" value="ZF_RING_2"/>
    <property type="match status" value="1"/>
</dbReference>
<feature type="chain" id="PRO_0000249438" description="E3 ubiquitin-protein ligase TRIM68">
    <location>
        <begin position="1"/>
        <end position="485"/>
    </location>
</feature>
<feature type="domain" description="B30.2/SPRY" evidence="5">
    <location>
        <begin position="285"/>
        <end position="483"/>
    </location>
</feature>
<feature type="zinc finger region" description="RING-type" evidence="4">
    <location>
        <begin position="16"/>
        <end position="61"/>
    </location>
</feature>
<feature type="zinc finger region" description="B box-type" evidence="3">
    <location>
        <begin position="93"/>
        <end position="134"/>
    </location>
</feature>
<feature type="coiled-coil region" evidence="2">
    <location>
        <begin position="144"/>
        <end position="226"/>
    </location>
</feature>
<feature type="binding site" evidence="3">
    <location>
        <position position="98"/>
    </location>
    <ligand>
        <name>Zn(2+)</name>
        <dbReference type="ChEBI" id="CHEBI:29105"/>
    </ligand>
</feature>
<feature type="binding site" evidence="3">
    <location>
        <position position="101"/>
    </location>
    <ligand>
        <name>Zn(2+)</name>
        <dbReference type="ChEBI" id="CHEBI:29105"/>
    </ligand>
</feature>
<feature type="binding site" evidence="3">
    <location>
        <position position="120"/>
    </location>
    <ligand>
        <name>Zn(2+)</name>
        <dbReference type="ChEBI" id="CHEBI:29105"/>
    </ligand>
</feature>
<feature type="binding site" evidence="3">
    <location>
        <position position="126"/>
    </location>
    <ligand>
        <name>Zn(2+)</name>
        <dbReference type="ChEBI" id="CHEBI:29105"/>
    </ligand>
</feature>
<organism>
    <name type="scientific">Mus musculus</name>
    <name type="common">Mouse</name>
    <dbReference type="NCBI Taxonomy" id="10090"/>
    <lineage>
        <taxon>Eukaryota</taxon>
        <taxon>Metazoa</taxon>
        <taxon>Chordata</taxon>
        <taxon>Craniata</taxon>
        <taxon>Vertebrata</taxon>
        <taxon>Euteleostomi</taxon>
        <taxon>Mammalia</taxon>
        <taxon>Eutheria</taxon>
        <taxon>Euarchontoglires</taxon>
        <taxon>Glires</taxon>
        <taxon>Rodentia</taxon>
        <taxon>Myomorpha</taxon>
        <taxon>Muroidea</taxon>
        <taxon>Muridae</taxon>
        <taxon>Murinae</taxon>
        <taxon>Mus</taxon>
        <taxon>Mus</taxon>
    </lineage>
</organism>
<evidence type="ECO:0000250" key="1">
    <source>
        <dbReference type="UniProtKB" id="Q6AZZ1"/>
    </source>
</evidence>
<evidence type="ECO:0000255" key="2"/>
<evidence type="ECO:0000255" key="3">
    <source>
        <dbReference type="PROSITE-ProRule" id="PRU00024"/>
    </source>
</evidence>
<evidence type="ECO:0000255" key="4">
    <source>
        <dbReference type="PROSITE-ProRule" id="PRU00175"/>
    </source>
</evidence>
<evidence type="ECO:0000255" key="5">
    <source>
        <dbReference type="PROSITE-ProRule" id="PRU00548"/>
    </source>
</evidence>
<evidence type="ECO:0000305" key="6"/>